<feature type="chain" id="PRO_0000130386" description="Large ribosomal subunit protein uL29">
    <location>
        <begin position="1"/>
        <end position="63"/>
    </location>
</feature>
<gene>
    <name type="primary">rpmC</name>
    <name type="ordered locus">Z4683</name>
    <name type="ordered locus">ECs4177</name>
</gene>
<comment type="function">
    <text evidence="1">One of the proteins that surrounds the polypeptide exit tunnel on the outside of the subunit.</text>
</comment>
<comment type="similarity">
    <text evidence="2">Belongs to the universal ribosomal protein uL29 family.</text>
</comment>
<name>RL29_ECO57</name>
<sequence length="63" mass="7273">MKAKELREKSVEELNTELLNLLREQFNLRMQAASGQLQQSHLLKQVRRDVARVKTLLNEKAGA</sequence>
<accession>P0A7M8</accession>
<accession>P02429</accession>
<dbReference type="EMBL" id="AE005174">
    <property type="protein sequence ID" value="AAG58433.1"/>
    <property type="molecule type" value="Genomic_DNA"/>
</dbReference>
<dbReference type="EMBL" id="BA000007">
    <property type="protein sequence ID" value="BAB37600.1"/>
    <property type="molecule type" value="Genomic_DNA"/>
</dbReference>
<dbReference type="PIR" id="A91151">
    <property type="entry name" value="A91151"/>
</dbReference>
<dbReference type="PIR" id="E85996">
    <property type="entry name" value="E85996"/>
</dbReference>
<dbReference type="RefSeq" id="NP_312204.1">
    <property type="nucleotide sequence ID" value="NC_002695.1"/>
</dbReference>
<dbReference type="RefSeq" id="WP_000644741.1">
    <property type="nucleotide sequence ID" value="NZ_VOAI01000041.1"/>
</dbReference>
<dbReference type="EMDB" id="EMD-42504"/>
<dbReference type="EMDB" id="EMD-46632"/>
<dbReference type="SMR" id="P0A7M8"/>
<dbReference type="STRING" id="155864.Z4683"/>
<dbReference type="GeneID" id="915971"/>
<dbReference type="GeneID" id="93778675"/>
<dbReference type="KEGG" id="ece:Z4683"/>
<dbReference type="KEGG" id="ecs:ECs_4177"/>
<dbReference type="PATRIC" id="fig|386585.9.peg.4360"/>
<dbReference type="eggNOG" id="COG0255">
    <property type="taxonomic scope" value="Bacteria"/>
</dbReference>
<dbReference type="HOGENOM" id="CLU_158491_1_2_6"/>
<dbReference type="OMA" id="RFQMATS"/>
<dbReference type="Proteomes" id="UP000000558">
    <property type="component" value="Chromosome"/>
</dbReference>
<dbReference type="Proteomes" id="UP000002519">
    <property type="component" value="Chromosome"/>
</dbReference>
<dbReference type="GO" id="GO:0022625">
    <property type="term" value="C:cytosolic large ribosomal subunit"/>
    <property type="evidence" value="ECO:0007669"/>
    <property type="project" value="TreeGrafter"/>
</dbReference>
<dbReference type="GO" id="GO:0003735">
    <property type="term" value="F:structural constituent of ribosome"/>
    <property type="evidence" value="ECO:0007669"/>
    <property type="project" value="InterPro"/>
</dbReference>
<dbReference type="GO" id="GO:0006412">
    <property type="term" value="P:translation"/>
    <property type="evidence" value="ECO:0007669"/>
    <property type="project" value="UniProtKB-UniRule"/>
</dbReference>
<dbReference type="CDD" id="cd00427">
    <property type="entry name" value="Ribosomal_L29_HIP"/>
    <property type="match status" value="1"/>
</dbReference>
<dbReference type="Gene3D" id="6.10.140.1970">
    <property type="match status" value="1"/>
</dbReference>
<dbReference type="HAMAP" id="MF_00374">
    <property type="entry name" value="Ribosomal_uL29"/>
    <property type="match status" value="1"/>
</dbReference>
<dbReference type="InterPro" id="IPR050063">
    <property type="entry name" value="Ribosomal_protein_uL29"/>
</dbReference>
<dbReference type="InterPro" id="IPR001854">
    <property type="entry name" value="Ribosomal_uL29"/>
</dbReference>
<dbReference type="InterPro" id="IPR018254">
    <property type="entry name" value="Ribosomal_uL29_CS"/>
</dbReference>
<dbReference type="InterPro" id="IPR036049">
    <property type="entry name" value="Ribosomal_uL29_sf"/>
</dbReference>
<dbReference type="NCBIfam" id="TIGR00012">
    <property type="entry name" value="L29"/>
    <property type="match status" value="1"/>
</dbReference>
<dbReference type="PANTHER" id="PTHR10916">
    <property type="entry name" value="60S RIBOSOMAL PROTEIN L35/50S RIBOSOMAL PROTEIN L29"/>
    <property type="match status" value="1"/>
</dbReference>
<dbReference type="PANTHER" id="PTHR10916:SF0">
    <property type="entry name" value="LARGE RIBOSOMAL SUBUNIT PROTEIN UL29C"/>
    <property type="match status" value="1"/>
</dbReference>
<dbReference type="Pfam" id="PF00831">
    <property type="entry name" value="Ribosomal_L29"/>
    <property type="match status" value="1"/>
</dbReference>
<dbReference type="SUPFAM" id="SSF46561">
    <property type="entry name" value="Ribosomal protein L29 (L29p)"/>
    <property type="match status" value="1"/>
</dbReference>
<dbReference type="PROSITE" id="PS00579">
    <property type="entry name" value="RIBOSOMAL_L29"/>
    <property type="match status" value="1"/>
</dbReference>
<keyword id="KW-1185">Reference proteome</keyword>
<keyword id="KW-0687">Ribonucleoprotein</keyword>
<keyword id="KW-0689">Ribosomal protein</keyword>
<evidence type="ECO:0000250" key="1"/>
<evidence type="ECO:0000305" key="2"/>
<reference key="1">
    <citation type="journal article" date="2001" name="Nature">
        <title>Genome sequence of enterohaemorrhagic Escherichia coli O157:H7.</title>
        <authorList>
            <person name="Perna N.T."/>
            <person name="Plunkett G. III"/>
            <person name="Burland V."/>
            <person name="Mau B."/>
            <person name="Glasner J.D."/>
            <person name="Rose D.J."/>
            <person name="Mayhew G.F."/>
            <person name="Evans P.S."/>
            <person name="Gregor J."/>
            <person name="Kirkpatrick H.A."/>
            <person name="Posfai G."/>
            <person name="Hackett J."/>
            <person name="Klink S."/>
            <person name="Boutin A."/>
            <person name="Shao Y."/>
            <person name="Miller L."/>
            <person name="Grotbeck E.J."/>
            <person name="Davis N.W."/>
            <person name="Lim A."/>
            <person name="Dimalanta E.T."/>
            <person name="Potamousis K."/>
            <person name="Apodaca J."/>
            <person name="Anantharaman T.S."/>
            <person name="Lin J."/>
            <person name="Yen G."/>
            <person name="Schwartz D.C."/>
            <person name="Welch R.A."/>
            <person name="Blattner F.R."/>
        </authorList>
    </citation>
    <scope>NUCLEOTIDE SEQUENCE [LARGE SCALE GENOMIC DNA]</scope>
    <source>
        <strain>O157:H7 / EDL933 / ATCC 700927 / EHEC</strain>
    </source>
</reference>
<reference key="2">
    <citation type="journal article" date="2001" name="DNA Res.">
        <title>Complete genome sequence of enterohemorrhagic Escherichia coli O157:H7 and genomic comparison with a laboratory strain K-12.</title>
        <authorList>
            <person name="Hayashi T."/>
            <person name="Makino K."/>
            <person name="Ohnishi M."/>
            <person name="Kurokawa K."/>
            <person name="Ishii K."/>
            <person name="Yokoyama K."/>
            <person name="Han C.-G."/>
            <person name="Ohtsubo E."/>
            <person name="Nakayama K."/>
            <person name="Murata T."/>
            <person name="Tanaka M."/>
            <person name="Tobe T."/>
            <person name="Iida T."/>
            <person name="Takami H."/>
            <person name="Honda T."/>
            <person name="Sasakawa C."/>
            <person name="Ogasawara N."/>
            <person name="Yasunaga T."/>
            <person name="Kuhara S."/>
            <person name="Shiba T."/>
            <person name="Hattori M."/>
            <person name="Shinagawa H."/>
        </authorList>
    </citation>
    <scope>NUCLEOTIDE SEQUENCE [LARGE SCALE GENOMIC DNA]</scope>
    <source>
        <strain>O157:H7 / Sakai / RIMD 0509952 / EHEC</strain>
    </source>
</reference>
<protein>
    <recommendedName>
        <fullName evidence="2">Large ribosomal subunit protein uL29</fullName>
    </recommendedName>
    <alternativeName>
        <fullName>50S ribosomal protein L29</fullName>
    </alternativeName>
</protein>
<organism>
    <name type="scientific">Escherichia coli O157:H7</name>
    <dbReference type="NCBI Taxonomy" id="83334"/>
    <lineage>
        <taxon>Bacteria</taxon>
        <taxon>Pseudomonadati</taxon>
        <taxon>Pseudomonadota</taxon>
        <taxon>Gammaproteobacteria</taxon>
        <taxon>Enterobacterales</taxon>
        <taxon>Enterobacteriaceae</taxon>
        <taxon>Escherichia</taxon>
    </lineage>
</organism>
<proteinExistence type="inferred from homology"/>